<comment type="subunit">
    <text evidence="1">Part of the 50S ribosomal subunit.</text>
</comment>
<comment type="similarity">
    <text evidence="1">Belongs to the universal ribosomal protein uL30 family.</text>
</comment>
<accession>Q3SSU8</accession>
<feature type="chain" id="PRO_0000273814" description="Large ribosomal subunit protein uL30">
    <location>
        <begin position="1"/>
        <end position="64"/>
    </location>
</feature>
<feature type="region of interest" description="Disordered" evidence="2">
    <location>
        <begin position="1"/>
        <end position="22"/>
    </location>
</feature>
<proteinExistence type="inferred from homology"/>
<sequence length="64" mass="7175">MAKAAKTIKVEQTGSAIRRHHSQRSTLVGLKLNKIGRTSELQDTPEIRGMIAKVRHIVRVIDET</sequence>
<dbReference type="EMBL" id="CP000115">
    <property type="protein sequence ID" value="ABA04643.1"/>
    <property type="molecule type" value="Genomic_DNA"/>
</dbReference>
<dbReference type="RefSeq" id="WP_011314656.1">
    <property type="nucleotide sequence ID" value="NC_007406.1"/>
</dbReference>
<dbReference type="SMR" id="Q3SSU8"/>
<dbReference type="STRING" id="323098.Nwi_1382"/>
<dbReference type="KEGG" id="nwi:Nwi_1382"/>
<dbReference type="eggNOG" id="COG1841">
    <property type="taxonomic scope" value="Bacteria"/>
</dbReference>
<dbReference type="HOGENOM" id="CLU_131047_1_2_5"/>
<dbReference type="OrthoDB" id="9812790at2"/>
<dbReference type="Proteomes" id="UP000002531">
    <property type="component" value="Chromosome"/>
</dbReference>
<dbReference type="GO" id="GO:0015934">
    <property type="term" value="C:large ribosomal subunit"/>
    <property type="evidence" value="ECO:0007669"/>
    <property type="project" value="InterPro"/>
</dbReference>
<dbReference type="GO" id="GO:0003735">
    <property type="term" value="F:structural constituent of ribosome"/>
    <property type="evidence" value="ECO:0007669"/>
    <property type="project" value="InterPro"/>
</dbReference>
<dbReference type="GO" id="GO:0006412">
    <property type="term" value="P:translation"/>
    <property type="evidence" value="ECO:0007669"/>
    <property type="project" value="UniProtKB-UniRule"/>
</dbReference>
<dbReference type="CDD" id="cd01658">
    <property type="entry name" value="Ribosomal_L30"/>
    <property type="match status" value="1"/>
</dbReference>
<dbReference type="Gene3D" id="3.30.1390.20">
    <property type="entry name" value="Ribosomal protein L30, ferredoxin-like fold domain"/>
    <property type="match status" value="1"/>
</dbReference>
<dbReference type="HAMAP" id="MF_01371_B">
    <property type="entry name" value="Ribosomal_uL30_B"/>
    <property type="match status" value="1"/>
</dbReference>
<dbReference type="InterPro" id="IPR036919">
    <property type="entry name" value="Ribo_uL30_ferredoxin-like_sf"/>
</dbReference>
<dbReference type="InterPro" id="IPR005996">
    <property type="entry name" value="Ribosomal_uL30_bac-type"/>
</dbReference>
<dbReference type="InterPro" id="IPR016082">
    <property type="entry name" value="Ribosomal_uL30_ferredoxin-like"/>
</dbReference>
<dbReference type="NCBIfam" id="TIGR01308">
    <property type="entry name" value="rpmD_bact"/>
    <property type="match status" value="1"/>
</dbReference>
<dbReference type="Pfam" id="PF00327">
    <property type="entry name" value="Ribosomal_L30"/>
    <property type="match status" value="1"/>
</dbReference>
<dbReference type="PIRSF" id="PIRSF002211">
    <property type="entry name" value="Ribosomal_L30_bac-type"/>
    <property type="match status" value="1"/>
</dbReference>
<dbReference type="SUPFAM" id="SSF55129">
    <property type="entry name" value="Ribosomal protein L30p/L7e"/>
    <property type="match status" value="1"/>
</dbReference>
<protein>
    <recommendedName>
        <fullName evidence="1">Large ribosomal subunit protein uL30</fullName>
    </recommendedName>
    <alternativeName>
        <fullName evidence="3">50S ribosomal protein L30</fullName>
    </alternativeName>
</protein>
<gene>
    <name evidence="1" type="primary">rpmD</name>
    <name type="ordered locus">Nwi_1382</name>
</gene>
<organism>
    <name type="scientific">Nitrobacter winogradskyi (strain ATCC 25391 / DSM 10237 / CIP 104748 / NCIMB 11846 / Nb-255)</name>
    <dbReference type="NCBI Taxonomy" id="323098"/>
    <lineage>
        <taxon>Bacteria</taxon>
        <taxon>Pseudomonadati</taxon>
        <taxon>Pseudomonadota</taxon>
        <taxon>Alphaproteobacteria</taxon>
        <taxon>Hyphomicrobiales</taxon>
        <taxon>Nitrobacteraceae</taxon>
        <taxon>Nitrobacter</taxon>
    </lineage>
</organism>
<name>RL30_NITWN</name>
<evidence type="ECO:0000255" key="1">
    <source>
        <dbReference type="HAMAP-Rule" id="MF_01371"/>
    </source>
</evidence>
<evidence type="ECO:0000256" key="2">
    <source>
        <dbReference type="SAM" id="MobiDB-lite"/>
    </source>
</evidence>
<evidence type="ECO:0000305" key="3"/>
<keyword id="KW-1185">Reference proteome</keyword>
<keyword id="KW-0687">Ribonucleoprotein</keyword>
<keyword id="KW-0689">Ribosomal protein</keyword>
<reference key="1">
    <citation type="journal article" date="2006" name="Appl. Environ. Microbiol.">
        <title>Genome sequence of the chemolithoautotrophic nitrite-oxidizing bacterium Nitrobacter winogradskyi Nb-255.</title>
        <authorList>
            <person name="Starkenburg S.R."/>
            <person name="Chain P.S.G."/>
            <person name="Sayavedra-Soto L.A."/>
            <person name="Hauser L."/>
            <person name="Land M.L."/>
            <person name="Larimer F.W."/>
            <person name="Malfatti S.A."/>
            <person name="Klotz M.G."/>
            <person name="Bottomley P.J."/>
            <person name="Arp D.J."/>
            <person name="Hickey W.J."/>
        </authorList>
    </citation>
    <scope>NUCLEOTIDE SEQUENCE [LARGE SCALE GENOMIC DNA]</scope>
    <source>
        <strain>ATCC 25391 / DSM 10237 / CIP 104748 / NCIMB 11846 / Nb-255</strain>
    </source>
</reference>